<comment type="sequence caution" evidence="1">
    <conflict type="frameshift">
        <sequence resource="EMBL-CDS" id="AAA86858"/>
    </conflict>
</comment>
<evidence type="ECO:0000305" key="1"/>
<name>Y1612_HALMA</name>
<dbReference type="EMBL" id="J05222">
    <property type="protein sequence ID" value="AAA86857.1"/>
    <property type="status" value="ALT_FRAME"/>
    <property type="molecule type" value="Genomic_DNA"/>
</dbReference>
<dbReference type="EMBL" id="J05222">
    <property type="protein sequence ID" value="AAA86858.1"/>
    <property type="status" value="ALT_FRAME"/>
    <property type="molecule type" value="Genomic_DNA"/>
</dbReference>
<dbReference type="EMBL" id="AY596297">
    <property type="protein sequence ID" value="AAV46529.1"/>
    <property type="molecule type" value="Genomic_DNA"/>
</dbReference>
<dbReference type="PIR" id="A35063">
    <property type="entry name" value="A35063"/>
</dbReference>
<dbReference type="PIR" id="B35063">
    <property type="entry name" value="B35063"/>
</dbReference>
<dbReference type="RefSeq" id="WP_004957426.1">
    <property type="nucleotide sequence ID" value="NZ_CP039138.1"/>
</dbReference>
<dbReference type="SMR" id="P20571"/>
<dbReference type="STRING" id="272569.rrnAC1612"/>
<dbReference type="PaxDb" id="272569-rrnAC1612"/>
<dbReference type="EnsemblBacteria" id="AAV46529">
    <property type="protein sequence ID" value="AAV46529"/>
    <property type="gene ID" value="rrnAC1612"/>
</dbReference>
<dbReference type="KEGG" id="hma:rrnAC1612"/>
<dbReference type="PATRIC" id="fig|272569.17.peg.2302"/>
<dbReference type="eggNOG" id="arCOG04069">
    <property type="taxonomic scope" value="Archaea"/>
</dbReference>
<dbReference type="HOGENOM" id="CLU_017233_1_0_2"/>
<dbReference type="Proteomes" id="UP000001169">
    <property type="component" value="Chromosome I"/>
</dbReference>
<dbReference type="CDD" id="cd18086">
    <property type="entry name" value="HsC9orf114-like"/>
    <property type="match status" value="1"/>
</dbReference>
<dbReference type="Gene3D" id="3.40.1280.10">
    <property type="match status" value="1"/>
</dbReference>
<dbReference type="Gene3D" id="2.40.50.140">
    <property type="entry name" value="Nucleic acid-binding proteins"/>
    <property type="match status" value="1"/>
</dbReference>
<dbReference type="InterPro" id="IPR029028">
    <property type="entry name" value="Alpha/beta_knot_MTases"/>
</dbReference>
<dbReference type="InterPro" id="IPR012340">
    <property type="entry name" value="NA-bd_OB-fold"/>
</dbReference>
<dbReference type="InterPro" id="IPR003750">
    <property type="entry name" value="Put_MeTrfase-C9orf114-like"/>
</dbReference>
<dbReference type="InterPro" id="IPR029026">
    <property type="entry name" value="tRNA_m1G_MTases_N"/>
</dbReference>
<dbReference type="PANTHER" id="PTHR12150">
    <property type="entry name" value="CLASS IV SAM-BINDING METHYLTRANSFERASE-RELATED"/>
    <property type="match status" value="1"/>
</dbReference>
<dbReference type="PANTHER" id="PTHR12150:SF13">
    <property type="entry name" value="METHYLTRANSFERASE C9ORF114-RELATED"/>
    <property type="match status" value="1"/>
</dbReference>
<dbReference type="Pfam" id="PF02598">
    <property type="entry name" value="Methyltrn_RNA_3"/>
    <property type="match status" value="1"/>
</dbReference>
<dbReference type="SUPFAM" id="SSF75217">
    <property type="entry name" value="alpha/beta knot"/>
    <property type="match status" value="1"/>
</dbReference>
<proteinExistence type="predicted"/>
<accession>P20571</accession>
<accession>P20572</accession>
<accession>Q5V1S3</accession>
<reference key="1">
    <citation type="journal article" date="1990" name="J. Biol. Chem.">
        <title>Organization and nucleotide sequence of a gene cluster coding for eight ribosomal proteins in the archaebacterium Halobacterium marismortui.</title>
        <authorList>
            <person name="Arndt E."/>
            <person name="Kroemer W."/>
            <person name="Hatakeyama T."/>
        </authorList>
    </citation>
    <scope>NUCLEOTIDE SEQUENCE [GENOMIC DNA]</scope>
</reference>
<reference key="2">
    <citation type="journal article" date="2004" name="Genome Res.">
        <title>Genome sequence of Haloarcula marismortui: a halophilic archaeon from the Dead Sea.</title>
        <authorList>
            <person name="Baliga N.S."/>
            <person name="Bonneau R."/>
            <person name="Facciotti M.T."/>
            <person name="Pan M."/>
            <person name="Glusman G."/>
            <person name="Deutsch E.W."/>
            <person name="Shannon P."/>
            <person name="Chiu Y."/>
            <person name="Weng R.S."/>
            <person name="Gan R.R."/>
            <person name="Hung P."/>
            <person name="Date S.V."/>
            <person name="Marcotte E."/>
            <person name="Hood L."/>
            <person name="Ng W.V."/>
        </authorList>
    </citation>
    <scope>NUCLEOTIDE SEQUENCE [LARGE SCALE GENOMIC DNA]</scope>
    <source>
        <strain>ATCC 43049 / DSM 3752 / JCM 8966 / VKM B-1809</strain>
    </source>
</reference>
<gene>
    <name type="ordered locus">rrnAC1612</name>
</gene>
<keyword id="KW-1185">Reference proteome</keyword>
<sequence length="281" mass="30194">MTTSVLVPSSLAREAEDRREATRKLGYVARAAAVYRVDRLTVYPDPDGAGKWEDGFVETVLRYAATPPHLRKEMWGKRDELEYVGVLPPLRVRSQTGSGSEGSGSLRQGIVTEVGADGRVRVNCGMQHPISLPVPADMDVEQGERVTVRVSSRRPVRAKLVDAPTTGFDVVAADLDAALSRDDAGLTIASSRYGEPVTSTRLGQLAERRDAEGGMTVAFGAPERGLPSILDVAPDAVGGDQTSDEPEGFDLWLNTVPNQGSEVVRTEEALFASLTCLTLTE</sequence>
<organism>
    <name type="scientific">Haloarcula marismortui (strain ATCC 43049 / DSM 3752 / JCM 8966 / VKM B-1809)</name>
    <name type="common">Halobacterium marismortui</name>
    <dbReference type="NCBI Taxonomy" id="272569"/>
    <lineage>
        <taxon>Archaea</taxon>
        <taxon>Methanobacteriati</taxon>
        <taxon>Methanobacteriota</taxon>
        <taxon>Stenosarchaea group</taxon>
        <taxon>Halobacteria</taxon>
        <taxon>Halobacteriales</taxon>
        <taxon>Haloarculaceae</taxon>
        <taxon>Haloarcula</taxon>
    </lineage>
</organism>
<protein>
    <recommendedName>
        <fullName>Uncharacterized protein rrnAC1612</fullName>
    </recommendedName>
</protein>
<feature type="chain" id="PRO_0000066071" description="Uncharacterized protein rrnAC1612">
    <location>
        <begin position="1"/>
        <end position="281"/>
    </location>
</feature>